<accession>B2LMI1</accession>
<evidence type="ECO:0000255" key="1">
    <source>
        <dbReference type="HAMAP-Rule" id="MF_01323"/>
    </source>
</evidence>
<organism>
    <name type="scientific">Guizotia abyssinica</name>
    <name type="common">Niger</name>
    <name type="synonym">Ramtilla</name>
    <dbReference type="NCBI Taxonomy" id="4230"/>
    <lineage>
        <taxon>Eukaryota</taxon>
        <taxon>Viridiplantae</taxon>
        <taxon>Streptophyta</taxon>
        <taxon>Embryophyta</taxon>
        <taxon>Tracheophyta</taxon>
        <taxon>Spermatophyta</taxon>
        <taxon>Magnoliopsida</taxon>
        <taxon>eudicotyledons</taxon>
        <taxon>Gunneridae</taxon>
        <taxon>Pentapetalae</taxon>
        <taxon>asterids</taxon>
        <taxon>campanulids</taxon>
        <taxon>Asterales</taxon>
        <taxon>Asteraceae</taxon>
        <taxon>Asteroideae</taxon>
        <taxon>Heliantheae alliance</taxon>
        <taxon>Millerieae</taxon>
        <taxon>Guizotia</taxon>
    </lineage>
</organism>
<name>RPOC1_GUIAB</name>
<keyword id="KW-0150">Chloroplast</keyword>
<keyword id="KW-0240">DNA-directed RNA polymerase</keyword>
<keyword id="KW-0460">Magnesium</keyword>
<keyword id="KW-0479">Metal-binding</keyword>
<keyword id="KW-0548">Nucleotidyltransferase</keyword>
<keyword id="KW-0934">Plastid</keyword>
<keyword id="KW-0804">Transcription</keyword>
<keyword id="KW-0808">Transferase</keyword>
<keyword id="KW-0862">Zinc</keyword>
<comment type="function">
    <text evidence="1">DNA-dependent RNA polymerase catalyzes the transcription of DNA into RNA using the four ribonucleoside triphosphates as substrates.</text>
</comment>
<comment type="catalytic activity">
    <reaction evidence="1">
        <text>RNA(n) + a ribonucleoside 5'-triphosphate = RNA(n+1) + diphosphate</text>
        <dbReference type="Rhea" id="RHEA:21248"/>
        <dbReference type="Rhea" id="RHEA-COMP:14527"/>
        <dbReference type="Rhea" id="RHEA-COMP:17342"/>
        <dbReference type="ChEBI" id="CHEBI:33019"/>
        <dbReference type="ChEBI" id="CHEBI:61557"/>
        <dbReference type="ChEBI" id="CHEBI:140395"/>
        <dbReference type="EC" id="2.7.7.6"/>
    </reaction>
</comment>
<comment type="cofactor">
    <cofactor evidence="1">
        <name>Mg(2+)</name>
        <dbReference type="ChEBI" id="CHEBI:18420"/>
    </cofactor>
    <text evidence="1">Binds 1 Mg(2+) ion per subunit.</text>
</comment>
<comment type="cofactor">
    <cofactor evidence="1">
        <name>Zn(2+)</name>
        <dbReference type="ChEBI" id="CHEBI:29105"/>
    </cofactor>
    <text evidence="1">Binds 1 Zn(2+) ion per subunit.</text>
</comment>
<comment type="subunit">
    <text evidence="1">In plastids the minimal PEP RNA polymerase catalytic core is composed of four subunits: alpha, beta, beta', and beta''. When a (nuclear-encoded) sigma factor is associated with the core the holoenzyme is formed, which can initiate transcription.</text>
</comment>
<comment type="subcellular location">
    <subcellularLocation>
        <location evidence="1">Plastid</location>
        <location evidence="1">Chloroplast</location>
    </subcellularLocation>
</comment>
<comment type="similarity">
    <text evidence="1">Belongs to the RNA polymerase beta' chain family. RpoC1 subfamily.</text>
</comment>
<geneLocation type="chloroplast"/>
<feature type="chain" id="PRO_0000353491" description="DNA-directed RNA polymerase subunit beta'">
    <location>
        <begin position="1"/>
        <end position="696"/>
    </location>
</feature>
<feature type="binding site" evidence="1">
    <location>
        <position position="76"/>
    </location>
    <ligand>
        <name>Zn(2+)</name>
        <dbReference type="ChEBI" id="CHEBI:29105"/>
    </ligand>
</feature>
<feature type="binding site" evidence="1">
    <location>
        <position position="78"/>
    </location>
    <ligand>
        <name>Zn(2+)</name>
        <dbReference type="ChEBI" id="CHEBI:29105"/>
    </ligand>
</feature>
<feature type="binding site" evidence="1">
    <location>
        <position position="94"/>
    </location>
    <ligand>
        <name>Zn(2+)</name>
        <dbReference type="ChEBI" id="CHEBI:29105"/>
    </ligand>
</feature>
<feature type="binding site" evidence="1">
    <location>
        <position position="97"/>
    </location>
    <ligand>
        <name>Zn(2+)</name>
        <dbReference type="ChEBI" id="CHEBI:29105"/>
    </ligand>
</feature>
<feature type="binding site" evidence="1">
    <location>
        <position position="496"/>
    </location>
    <ligand>
        <name>Mg(2+)</name>
        <dbReference type="ChEBI" id="CHEBI:18420"/>
    </ligand>
</feature>
<feature type="binding site" evidence="1">
    <location>
        <position position="498"/>
    </location>
    <ligand>
        <name>Mg(2+)</name>
        <dbReference type="ChEBI" id="CHEBI:18420"/>
    </ligand>
</feature>
<feature type="binding site" evidence="1">
    <location>
        <position position="500"/>
    </location>
    <ligand>
        <name>Mg(2+)</name>
        <dbReference type="ChEBI" id="CHEBI:18420"/>
    </ligand>
</feature>
<gene>
    <name evidence="1" type="primary">rpoC1</name>
    <name type="ordered locus">GuabCp009</name>
</gene>
<sequence>MKQKFSSMIDRYTHQQLRIGLVSPQQISTWSKKILPNGEIVGEVTKPYTFHYKTNKPEKDGLFCERIFGPIKSGICACGNYRVIGDEKEDPQFCEQCGVEFVDSRIRRYQMGYIKLAYPVMHVWYLKRLPSYIVNLLDKPLNELEDLVYCGFYFARPIDKKPTFLRLRGLLEYEIQPWKYRIPIFFTTRSFDTFRNREMSTGGGSIRQQLANLDLRMIIDYSLVEWKELEEEEPTGNEWEDRKVGRRKDFLLRRMELAKHFIRTNIEPKWMVLCLLPVLPPELRPIYHIDEDKLVTSDINEIYRRIIYRNNTLTDLLTTSIATPEELIISQEKLLQEAVDALLDNGICGQPMRDDHNRIYKSLSDVIEGKEGRVRETLLGKRVDYSGRSVIVVGPSLSLHRCGLPREIAIELFQAFVIRDLIRKHLASNIGVAKSQIRKKKPIVWEILQEILDDHPVLLNRAPTLHRLGIQAFLPILVEGRAICLHPLVCKGFNADFDGDQMAVHVPLSLEAQAEARLLMFSHMNLLSPTIGDPISAPTQDMLSGLYVLTSGNRRGICVNRYNPCNRRNYQNEDNNYKYTKKKEPFFCNAYDAIGAYRQKRIHLGSPLWLRWRLDQRVIAAREAPIEIHYESLGTYYEIYGHYLIVRSIKKEILYIYIRTTLGHIYLYREIEEAIQGFWQGCCNSMLPAGIRVSPG</sequence>
<protein>
    <recommendedName>
        <fullName evidence="1">DNA-directed RNA polymerase subunit beta'</fullName>
        <ecNumber evidence="1">2.7.7.6</ecNumber>
    </recommendedName>
    <alternativeName>
        <fullName evidence="1">PEP</fullName>
    </alternativeName>
    <alternativeName>
        <fullName evidence="1">Plastid-encoded RNA polymerase subunit beta'</fullName>
        <shortName evidence="1">RNA polymerase subunit beta'</shortName>
    </alternativeName>
</protein>
<dbReference type="EC" id="2.7.7.6" evidence="1"/>
<dbReference type="EMBL" id="EU549769">
    <property type="protein sequence ID" value="ACB86515.1"/>
    <property type="molecule type" value="Genomic_DNA"/>
</dbReference>
<dbReference type="RefSeq" id="YP_001837348.2">
    <property type="nucleotide sequence ID" value="NC_010601.1"/>
</dbReference>
<dbReference type="SMR" id="B2LMI1"/>
<dbReference type="GeneID" id="6219097"/>
<dbReference type="GO" id="GO:0009507">
    <property type="term" value="C:chloroplast"/>
    <property type="evidence" value="ECO:0007669"/>
    <property type="project" value="UniProtKB-SubCell"/>
</dbReference>
<dbReference type="GO" id="GO:0000428">
    <property type="term" value="C:DNA-directed RNA polymerase complex"/>
    <property type="evidence" value="ECO:0007669"/>
    <property type="project" value="UniProtKB-KW"/>
</dbReference>
<dbReference type="GO" id="GO:0005739">
    <property type="term" value="C:mitochondrion"/>
    <property type="evidence" value="ECO:0007669"/>
    <property type="project" value="GOC"/>
</dbReference>
<dbReference type="GO" id="GO:0003677">
    <property type="term" value="F:DNA binding"/>
    <property type="evidence" value="ECO:0007669"/>
    <property type="project" value="UniProtKB-UniRule"/>
</dbReference>
<dbReference type="GO" id="GO:0003899">
    <property type="term" value="F:DNA-directed RNA polymerase activity"/>
    <property type="evidence" value="ECO:0007669"/>
    <property type="project" value="UniProtKB-UniRule"/>
</dbReference>
<dbReference type="GO" id="GO:0000287">
    <property type="term" value="F:magnesium ion binding"/>
    <property type="evidence" value="ECO:0007669"/>
    <property type="project" value="UniProtKB-UniRule"/>
</dbReference>
<dbReference type="GO" id="GO:0008270">
    <property type="term" value="F:zinc ion binding"/>
    <property type="evidence" value="ECO:0007669"/>
    <property type="project" value="UniProtKB-UniRule"/>
</dbReference>
<dbReference type="GO" id="GO:0006351">
    <property type="term" value="P:DNA-templated transcription"/>
    <property type="evidence" value="ECO:0007669"/>
    <property type="project" value="UniProtKB-UniRule"/>
</dbReference>
<dbReference type="FunFam" id="4.10.860.120:FF:000007">
    <property type="entry name" value="DNA-directed RNA polymerase subunit gamma"/>
    <property type="match status" value="1"/>
</dbReference>
<dbReference type="Gene3D" id="1.10.40.90">
    <property type="match status" value="1"/>
</dbReference>
<dbReference type="Gene3D" id="2.40.40.20">
    <property type="match status" value="1"/>
</dbReference>
<dbReference type="Gene3D" id="4.10.860.120">
    <property type="entry name" value="RNA polymerase II, clamp domain"/>
    <property type="match status" value="1"/>
</dbReference>
<dbReference type="Gene3D" id="1.10.274.100">
    <property type="entry name" value="RNA polymerase Rpb1, domain 3"/>
    <property type="match status" value="1"/>
</dbReference>
<dbReference type="HAMAP" id="MF_01323">
    <property type="entry name" value="RNApol_bact_RpoC1"/>
    <property type="match status" value="1"/>
</dbReference>
<dbReference type="InterPro" id="IPR045867">
    <property type="entry name" value="DNA-dir_RpoC_beta_prime"/>
</dbReference>
<dbReference type="InterPro" id="IPR000722">
    <property type="entry name" value="RNA_pol_asu"/>
</dbReference>
<dbReference type="InterPro" id="IPR006592">
    <property type="entry name" value="RNA_pol_N"/>
</dbReference>
<dbReference type="InterPro" id="IPR007080">
    <property type="entry name" value="RNA_pol_Rpb1_1"/>
</dbReference>
<dbReference type="InterPro" id="IPR042102">
    <property type="entry name" value="RNA_pol_Rpb1_3_sf"/>
</dbReference>
<dbReference type="InterPro" id="IPR044893">
    <property type="entry name" value="RNA_pol_Rpb1_clamp_domain"/>
</dbReference>
<dbReference type="InterPro" id="IPR034678">
    <property type="entry name" value="RNApol_RpoC1"/>
</dbReference>
<dbReference type="PANTHER" id="PTHR19376">
    <property type="entry name" value="DNA-DIRECTED RNA POLYMERASE"/>
    <property type="match status" value="1"/>
</dbReference>
<dbReference type="PANTHER" id="PTHR19376:SF68">
    <property type="entry name" value="DNA-DIRECTED RNA POLYMERASE SUBUNIT BETA"/>
    <property type="match status" value="1"/>
</dbReference>
<dbReference type="Pfam" id="PF04997">
    <property type="entry name" value="RNA_pol_Rpb1_1"/>
    <property type="match status" value="2"/>
</dbReference>
<dbReference type="Pfam" id="PF00623">
    <property type="entry name" value="RNA_pol_Rpb1_2"/>
    <property type="match status" value="2"/>
</dbReference>
<dbReference type="SMART" id="SM00663">
    <property type="entry name" value="RPOLA_N"/>
    <property type="match status" value="1"/>
</dbReference>
<dbReference type="SUPFAM" id="SSF64484">
    <property type="entry name" value="beta and beta-prime subunits of DNA dependent RNA-polymerase"/>
    <property type="match status" value="1"/>
</dbReference>
<reference key="1">
    <citation type="submission" date="2008-03" db="EMBL/GenBank/DDBJ databases">
        <title>Guizotia abyssinica chloroplast sequenced using Solexa.</title>
        <authorList>
            <person name="Kane N.C."/>
            <person name="Dempewolf H."/>
            <person name="Stewart M.L."/>
            <person name="Cronk Q."/>
            <person name="Rieseberrg L.H."/>
        </authorList>
    </citation>
    <scope>NUCLEOTIDE SEQUENCE [LARGE SCALE GENOMIC DNA]</scope>
    <source>
        <strain>cv. PI 508077</strain>
    </source>
</reference>
<proteinExistence type="inferred from homology"/>